<proteinExistence type="evidence at protein level"/>
<name>GGT2_SCHPO</name>
<keyword id="KW-0012">Acyltransferase</keyword>
<keyword id="KW-0325">Glycoprotein</keyword>
<keyword id="KW-0378">Hydrolase</keyword>
<keyword id="KW-0472">Membrane</keyword>
<keyword id="KW-0645">Protease</keyword>
<keyword id="KW-1185">Reference proteome</keyword>
<keyword id="KW-0735">Signal-anchor</keyword>
<keyword id="KW-0808">Transferase</keyword>
<keyword id="KW-0812">Transmembrane</keyword>
<keyword id="KW-1133">Transmembrane helix</keyword>
<keyword id="KW-0926">Vacuole</keyword>
<accession>O14194</accession>
<evidence type="ECO:0000250" key="1"/>
<evidence type="ECO:0000255" key="2"/>
<evidence type="ECO:0000269" key="3">
    <source>
    </source>
</evidence>
<evidence type="ECO:0000269" key="4">
    <source>
    </source>
</evidence>
<evidence type="ECO:0000305" key="5"/>
<evidence type="ECO:0000305" key="6">
    <source>
    </source>
</evidence>
<organism>
    <name type="scientific">Schizosaccharomyces pombe (strain 972 / ATCC 24843)</name>
    <name type="common">Fission yeast</name>
    <dbReference type="NCBI Taxonomy" id="284812"/>
    <lineage>
        <taxon>Eukaryota</taxon>
        <taxon>Fungi</taxon>
        <taxon>Dikarya</taxon>
        <taxon>Ascomycota</taxon>
        <taxon>Taphrinomycotina</taxon>
        <taxon>Schizosaccharomycetes</taxon>
        <taxon>Schizosaccharomycetales</taxon>
        <taxon>Schizosaccharomycetaceae</taxon>
        <taxon>Schizosaccharomyces</taxon>
    </lineage>
</organism>
<feature type="chain" id="PRO_0000247900" description="Glutathione hydrolase 2 heavy chain" evidence="1">
    <location>
        <begin position="1"/>
        <end position="419"/>
    </location>
</feature>
<feature type="chain" id="PRO_0000247901" description="Glutathione hydrolase 2 light chain" evidence="1">
    <location>
        <begin position="420"/>
        <end position="611"/>
    </location>
</feature>
<feature type="topological domain" description="Cytoplasmic" evidence="2">
    <location>
        <begin position="1"/>
        <end position="42"/>
    </location>
</feature>
<feature type="transmembrane region" description="Helical; Signal-anchor for type II membrane protein" evidence="2">
    <location>
        <begin position="43"/>
        <end position="63"/>
    </location>
</feature>
<feature type="topological domain" description="Lumenal" evidence="2">
    <location>
        <begin position="64"/>
        <end position="611"/>
    </location>
</feature>
<feature type="active site" description="Nucleophile" evidence="1">
    <location>
        <position position="420"/>
    </location>
</feature>
<feature type="binding site" evidence="1">
    <location>
        <position position="147"/>
    </location>
    <ligand>
        <name>L-glutamate</name>
        <dbReference type="ChEBI" id="CHEBI:29985"/>
    </ligand>
</feature>
<feature type="binding site" evidence="1">
    <location>
        <position position="438"/>
    </location>
    <ligand>
        <name>L-glutamate</name>
        <dbReference type="ChEBI" id="CHEBI:29985"/>
    </ligand>
</feature>
<feature type="binding site" evidence="1">
    <location>
        <position position="440"/>
    </location>
    <ligand>
        <name>L-glutamate</name>
        <dbReference type="ChEBI" id="CHEBI:29985"/>
    </ligand>
</feature>
<feature type="binding site" evidence="1">
    <location>
        <position position="459"/>
    </location>
    <ligand>
        <name>L-glutamate</name>
        <dbReference type="ChEBI" id="CHEBI:29985"/>
    </ligand>
</feature>
<feature type="binding site" evidence="1">
    <location>
        <position position="462"/>
    </location>
    <ligand>
        <name>L-glutamate</name>
        <dbReference type="ChEBI" id="CHEBI:29985"/>
    </ligand>
</feature>
<feature type="binding site" evidence="1">
    <location>
        <begin position="490"/>
        <end position="491"/>
    </location>
    <ligand>
        <name>L-glutamate</name>
        <dbReference type="ChEBI" id="CHEBI:29985"/>
    </ligand>
</feature>
<feature type="binding site" evidence="1">
    <location>
        <begin position="512"/>
        <end position="513"/>
    </location>
    <ligand>
        <name>L-glutamate</name>
        <dbReference type="ChEBI" id="CHEBI:29985"/>
    </ligand>
</feature>
<feature type="glycosylation site" description="N-linked (GlcNAc...) asparagine" evidence="2">
    <location>
        <position position="138"/>
    </location>
</feature>
<feature type="glycosylation site" description="N-linked (GlcNAc...) asparagine" evidence="2">
    <location>
        <position position="153"/>
    </location>
</feature>
<feature type="glycosylation site" description="N-linked (GlcNAc...) asparagine" evidence="2">
    <location>
        <position position="297"/>
    </location>
</feature>
<feature type="glycosylation site" description="N-linked (GlcNAc...) asparagine" evidence="2">
    <location>
        <position position="396"/>
    </location>
</feature>
<gene>
    <name type="primary">ggt2</name>
    <name type="ORF">SPAC56E4.06c</name>
</gene>
<dbReference type="EC" id="3.4.19.13"/>
<dbReference type="EC" id="2.3.2.2" evidence="6"/>
<dbReference type="EMBL" id="AY359853">
    <property type="protein sequence ID" value="AAQ57121.1"/>
    <property type="molecule type" value="Genomic_DNA"/>
</dbReference>
<dbReference type="EMBL" id="CU329670">
    <property type="protein sequence ID" value="CAB16397.1"/>
    <property type="molecule type" value="Genomic_DNA"/>
</dbReference>
<dbReference type="PIR" id="T38908">
    <property type="entry name" value="T38908"/>
</dbReference>
<dbReference type="RefSeq" id="NP_593273.1">
    <property type="nucleotide sequence ID" value="NM_001018670.2"/>
</dbReference>
<dbReference type="SMR" id="O14194"/>
<dbReference type="BioGRID" id="279542">
    <property type="interactions" value="8"/>
</dbReference>
<dbReference type="FunCoup" id="O14194">
    <property type="interactions" value="110"/>
</dbReference>
<dbReference type="STRING" id="284812.O14194"/>
<dbReference type="MEROPS" id="T03.011"/>
<dbReference type="GlyCosmos" id="O14194">
    <property type="glycosylation" value="4 sites, No reported glycans"/>
</dbReference>
<dbReference type="iPTMnet" id="O14194"/>
<dbReference type="PaxDb" id="4896-SPAC56E4.06c.1"/>
<dbReference type="EnsemblFungi" id="SPAC56E4.06c.1">
    <property type="protein sequence ID" value="SPAC56E4.06c.1:pep"/>
    <property type="gene ID" value="SPAC56E4.06c"/>
</dbReference>
<dbReference type="GeneID" id="2543110"/>
<dbReference type="KEGG" id="spo:2543110"/>
<dbReference type="PomBase" id="SPAC56E4.06c">
    <property type="gene designation" value="ggt2"/>
</dbReference>
<dbReference type="VEuPathDB" id="FungiDB:SPAC56E4.06c"/>
<dbReference type="eggNOG" id="KOG2410">
    <property type="taxonomic scope" value="Eukaryota"/>
</dbReference>
<dbReference type="HOGENOM" id="CLU_014813_4_0_1"/>
<dbReference type="InParanoid" id="O14194"/>
<dbReference type="OMA" id="SFWPRTW"/>
<dbReference type="PhylomeDB" id="O14194"/>
<dbReference type="BRENDA" id="2.3.2.2">
    <property type="organism ID" value="5613"/>
</dbReference>
<dbReference type="Reactome" id="R-SPO-174403">
    <property type="pathway name" value="Glutathione synthesis and recycling"/>
</dbReference>
<dbReference type="Reactome" id="R-SPO-2142691">
    <property type="pathway name" value="Synthesis of Leukotrienes (LT) and Eoxins (EX)"/>
</dbReference>
<dbReference type="Reactome" id="R-SPO-5423646">
    <property type="pathway name" value="Aflatoxin activation and detoxification"/>
</dbReference>
<dbReference type="Reactome" id="R-SPO-9753281">
    <property type="pathway name" value="Paracetamol ADME"/>
</dbReference>
<dbReference type="UniPathway" id="UPA00204"/>
<dbReference type="PRO" id="PR:O14194"/>
<dbReference type="Proteomes" id="UP000002485">
    <property type="component" value="Chromosome I"/>
</dbReference>
<dbReference type="GO" id="GO:0000324">
    <property type="term" value="C:fungal-type vacuole"/>
    <property type="evidence" value="ECO:0007005"/>
    <property type="project" value="PomBase"/>
</dbReference>
<dbReference type="GO" id="GO:0005886">
    <property type="term" value="C:plasma membrane"/>
    <property type="evidence" value="ECO:0000318"/>
    <property type="project" value="GO_Central"/>
</dbReference>
<dbReference type="GO" id="GO:0005774">
    <property type="term" value="C:vacuolar membrane"/>
    <property type="evidence" value="ECO:0007669"/>
    <property type="project" value="UniProtKB-SubCell"/>
</dbReference>
<dbReference type="GO" id="GO:0036374">
    <property type="term" value="F:glutathione hydrolase activity"/>
    <property type="evidence" value="ECO:0000269"/>
    <property type="project" value="PomBase"/>
</dbReference>
<dbReference type="GO" id="GO:0103068">
    <property type="term" value="F:leukotriene C4 gamma-glutamyl transferase activity"/>
    <property type="evidence" value="ECO:0007669"/>
    <property type="project" value="UniProtKB-EC"/>
</dbReference>
<dbReference type="GO" id="GO:1990748">
    <property type="term" value="P:cellular detoxification"/>
    <property type="evidence" value="ECO:0000303"/>
    <property type="project" value="PomBase"/>
</dbReference>
<dbReference type="GO" id="GO:0006751">
    <property type="term" value="P:glutathione catabolic process"/>
    <property type="evidence" value="ECO:0000318"/>
    <property type="project" value="GO_Central"/>
</dbReference>
<dbReference type="GO" id="GO:0006508">
    <property type="term" value="P:proteolysis"/>
    <property type="evidence" value="ECO:0007669"/>
    <property type="project" value="UniProtKB-KW"/>
</dbReference>
<dbReference type="FunFam" id="3.60.20.40:FF:000001">
    <property type="entry name" value="Gamma-glutamyltranspeptidase 1"/>
    <property type="match status" value="1"/>
</dbReference>
<dbReference type="Gene3D" id="1.10.246.130">
    <property type="match status" value="1"/>
</dbReference>
<dbReference type="Gene3D" id="3.60.20.40">
    <property type="match status" value="1"/>
</dbReference>
<dbReference type="InterPro" id="IPR043138">
    <property type="entry name" value="GGT_lsub_C"/>
</dbReference>
<dbReference type="InterPro" id="IPR000101">
    <property type="entry name" value="GGT_peptidase"/>
</dbReference>
<dbReference type="InterPro" id="IPR043137">
    <property type="entry name" value="GGT_ssub"/>
</dbReference>
<dbReference type="InterPro" id="IPR029055">
    <property type="entry name" value="Ntn_hydrolases_N"/>
</dbReference>
<dbReference type="NCBIfam" id="TIGR00066">
    <property type="entry name" value="g_glut_trans"/>
    <property type="match status" value="1"/>
</dbReference>
<dbReference type="PANTHER" id="PTHR11686">
    <property type="entry name" value="GAMMA GLUTAMYL TRANSPEPTIDASE"/>
    <property type="match status" value="1"/>
</dbReference>
<dbReference type="PANTHER" id="PTHR11686:SF9">
    <property type="entry name" value="RE13973P"/>
    <property type="match status" value="1"/>
</dbReference>
<dbReference type="Pfam" id="PF01019">
    <property type="entry name" value="G_glu_transpept"/>
    <property type="match status" value="1"/>
</dbReference>
<dbReference type="PRINTS" id="PR01210">
    <property type="entry name" value="GGTRANSPTASE"/>
</dbReference>
<dbReference type="SUPFAM" id="SSF56235">
    <property type="entry name" value="N-terminal nucleophile aminohydrolases (Ntn hydrolases)"/>
    <property type="match status" value="1"/>
</dbReference>
<protein>
    <recommendedName>
        <fullName>Glutathione hydrolase proenzyme 2</fullName>
        <ecNumber>3.4.19.13</ecNumber>
    </recommendedName>
    <alternativeName>
        <fullName>Gamma-glutamyltransferase 2</fullName>
    </alternativeName>
    <alternativeName>
        <fullName>Gamma-glutamyltranspeptidase 2</fullName>
        <ecNumber evidence="6">2.3.2.2</ecNumber>
    </alternativeName>
    <component>
        <recommendedName>
            <fullName>Glutathione hydrolase 2 heavy chain</fullName>
        </recommendedName>
    </component>
    <component>
        <recommendedName>
            <fullName>Glutathione hydrolase 2 light chain</fullName>
        </recommendedName>
    </component>
</protein>
<sequence length="611" mass="67825">MSPTDTTPLLYSWDDQSRHQDPDWHKLRNYHGAWYRRISRRRFSQFIFAFGLMTLFVLVYSISSNLHTPTQFTGHKVRGRRGAVASEVPVCSDIGVSMLADGGNAVDAAIASTFCIGVVNFFSSGIGGGGFMLIKHPNETAQSLTFREIAPGNVSKHMFDKNPMLAQVGPLSIAIPGELAGLYEAWKSHGLLDWSKLLEPNVKLAREGFPVTRAMERVLKLPEMAHLLKDPIWQPILMPNGKVLRAGDKMFRPAYAKTLEIIANKGIEPFYRGELTNSMVKFIQDNGGIVTVEDFGNYSTVFADALHTSYRGHDVYTCTLPTSGPALIEGLNILDGYPLNTPSLAFPKRLHLEVEAMKWLSAGRTQFGDPDFLPLDHLDVVSKLLSKEFASQIRNNISLSKTYPWEHYNPSYDLPISHGTTHVSTVDSNNLAVSITSTVNLLFGSQLMDPVTGVVFNDQMDDFSIPGASNAFNLSPSPWNFIEPFKRPQSSSAPTILTDINGDFEMALGASGGSRIVTAVLDSIIKRIDMDYDIESMVASARPHHQLLPDILILESGFSKSVATRMKKYGHKVWRLKQHDTPLSQIQAVTRHHSEYYGMSDPRKYGQAAAY</sequence>
<reference key="1">
    <citation type="journal article" date="2005" name="Can. J. Microbiol.">
        <title>Characterization of a second gene encoding gamma-glutamyl transpeptidase from Schizosaccharomyces pombe.</title>
        <authorList>
            <person name="Park H.-J."/>
            <person name="Moon J.-S."/>
            <person name="Kim H.-G."/>
            <person name="Kim I.-H."/>
            <person name="Kim K."/>
            <person name="Park E.-H."/>
            <person name="Lim C.-J."/>
        </authorList>
    </citation>
    <scope>NUCLEOTIDE SEQUENCE [GENOMIC DNA]</scope>
    <scope>FUNCTION</scope>
    <scope>CATALYTIC ACTIVITY</scope>
</reference>
<reference key="2">
    <citation type="journal article" date="2002" name="Nature">
        <title>The genome sequence of Schizosaccharomyces pombe.</title>
        <authorList>
            <person name="Wood V."/>
            <person name="Gwilliam R."/>
            <person name="Rajandream M.A."/>
            <person name="Lyne M.H."/>
            <person name="Lyne R."/>
            <person name="Stewart A."/>
            <person name="Sgouros J.G."/>
            <person name="Peat N."/>
            <person name="Hayles J."/>
            <person name="Baker S.G."/>
            <person name="Basham D."/>
            <person name="Bowman S."/>
            <person name="Brooks K."/>
            <person name="Brown D."/>
            <person name="Brown S."/>
            <person name="Chillingworth T."/>
            <person name="Churcher C.M."/>
            <person name="Collins M."/>
            <person name="Connor R."/>
            <person name="Cronin A."/>
            <person name="Davis P."/>
            <person name="Feltwell T."/>
            <person name="Fraser A."/>
            <person name="Gentles S."/>
            <person name="Goble A."/>
            <person name="Hamlin N."/>
            <person name="Harris D.E."/>
            <person name="Hidalgo J."/>
            <person name="Hodgson G."/>
            <person name="Holroyd S."/>
            <person name="Hornsby T."/>
            <person name="Howarth S."/>
            <person name="Huckle E.J."/>
            <person name="Hunt S."/>
            <person name="Jagels K."/>
            <person name="James K.D."/>
            <person name="Jones L."/>
            <person name="Jones M."/>
            <person name="Leather S."/>
            <person name="McDonald S."/>
            <person name="McLean J."/>
            <person name="Mooney P."/>
            <person name="Moule S."/>
            <person name="Mungall K.L."/>
            <person name="Murphy L.D."/>
            <person name="Niblett D."/>
            <person name="Odell C."/>
            <person name="Oliver K."/>
            <person name="O'Neil S."/>
            <person name="Pearson D."/>
            <person name="Quail M.A."/>
            <person name="Rabbinowitsch E."/>
            <person name="Rutherford K.M."/>
            <person name="Rutter S."/>
            <person name="Saunders D."/>
            <person name="Seeger K."/>
            <person name="Sharp S."/>
            <person name="Skelton J."/>
            <person name="Simmonds M.N."/>
            <person name="Squares R."/>
            <person name="Squares S."/>
            <person name="Stevens K."/>
            <person name="Taylor K."/>
            <person name="Taylor R.G."/>
            <person name="Tivey A."/>
            <person name="Walsh S.V."/>
            <person name="Warren T."/>
            <person name="Whitehead S."/>
            <person name="Woodward J.R."/>
            <person name="Volckaert G."/>
            <person name="Aert R."/>
            <person name="Robben J."/>
            <person name="Grymonprez B."/>
            <person name="Weltjens I."/>
            <person name="Vanstreels E."/>
            <person name="Rieger M."/>
            <person name="Schaefer M."/>
            <person name="Mueller-Auer S."/>
            <person name="Gabel C."/>
            <person name="Fuchs M."/>
            <person name="Duesterhoeft A."/>
            <person name="Fritzc C."/>
            <person name="Holzer E."/>
            <person name="Moestl D."/>
            <person name="Hilbert H."/>
            <person name="Borzym K."/>
            <person name="Langer I."/>
            <person name="Beck A."/>
            <person name="Lehrach H."/>
            <person name="Reinhardt R."/>
            <person name="Pohl T.M."/>
            <person name="Eger P."/>
            <person name="Zimmermann W."/>
            <person name="Wedler H."/>
            <person name="Wambutt R."/>
            <person name="Purnelle B."/>
            <person name="Goffeau A."/>
            <person name="Cadieu E."/>
            <person name="Dreano S."/>
            <person name="Gloux S."/>
            <person name="Lelaure V."/>
            <person name="Mottier S."/>
            <person name="Galibert F."/>
            <person name="Aves S.J."/>
            <person name="Xiang Z."/>
            <person name="Hunt C."/>
            <person name="Moore K."/>
            <person name="Hurst S.M."/>
            <person name="Lucas M."/>
            <person name="Rochet M."/>
            <person name="Gaillardin C."/>
            <person name="Tallada V.A."/>
            <person name="Garzon A."/>
            <person name="Thode G."/>
            <person name="Daga R.R."/>
            <person name="Cruzado L."/>
            <person name="Jimenez J."/>
            <person name="Sanchez M."/>
            <person name="del Rey F."/>
            <person name="Benito J."/>
            <person name="Dominguez A."/>
            <person name="Revuelta J.L."/>
            <person name="Moreno S."/>
            <person name="Armstrong J."/>
            <person name="Forsburg S.L."/>
            <person name="Cerutti L."/>
            <person name="Lowe T."/>
            <person name="McCombie W.R."/>
            <person name="Paulsen I."/>
            <person name="Potashkin J."/>
            <person name="Shpakovski G.V."/>
            <person name="Ussery D."/>
            <person name="Barrell B.G."/>
            <person name="Nurse P."/>
        </authorList>
    </citation>
    <scope>NUCLEOTIDE SEQUENCE [LARGE SCALE GENOMIC DNA]</scope>
    <source>
        <strain>972 / ATCC 24843</strain>
    </source>
</reference>
<reference key="3">
    <citation type="journal article" date="2005" name="J. Biochem. Mol. Biol.">
        <title>The gene encoding gamma-glutamyl transpeptidase II in the fission yeast is regulated by oxidative and metabolic stress.</title>
        <authorList>
            <person name="Kang H.-J."/>
            <person name="Kim B.-C."/>
            <person name="Park E.-H."/>
            <person name="Ahn K."/>
            <person name="Lim C.-J."/>
        </authorList>
    </citation>
    <scope>INDUCTION</scope>
</reference>
<reference key="4">
    <citation type="journal article" date="2006" name="Nat. Biotechnol.">
        <title>ORFeome cloning and global analysis of protein localization in the fission yeast Schizosaccharomyces pombe.</title>
        <authorList>
            <person name="Matsuyama A."/>
            <person name="Arai R."/>
            <person name="Yashiroda Y."/>
            <person name="Shirai A."/>
            <person name="Kamata A."/>
            <person name="Sekido S."/>
            <person name="Kobayashi Y."/>
            <person name="Hashimoto A."/>
            <person name="Hamamoto M."/>
            <person name="Hiraoka Y."/>
            <person name="Horinouchi S."/>
            <person name="Yoshida M."/>
        </authorList>
    </citation>
    <scope>SUBCELLULAR LOCATION [LARGE SCALE ANALYSIS]</scope>
</reference>
<comment type="function">
    <text evidence="1 3">Catalyzes the transfer of the gamma-glutamyl moiety of glutathione (GSH) and other gamma-glutamyl compounds to amino acids and peptides. Major GSH-degrading enzyme, catalyzing the hydrolytic release of L-glutamate from GSH. Plays a role in the turnover of the vacuolar GSH, serving as an alternative nitrogen source during nitrogen starvation (By similarity).</text>
</comment>
<comment type="catalytic activity">
    <reaction evidence="6">
        <text>an N-terminal (5-L-glutamyl)-[peptide] + an alpha-amino acid = 5-L-glutamyl amino acid + an N-terminal L-alpha-aminoacyl-[peptide]</text>
        <dbReference type="Rhea" id="RHEA:23904"/>
        <dbReference type="Rhea" id="RHEA-COMP:9780"/>
        <dbReference type="Rhea" id="RHEA-COMP:9795"/>
        <dbReference type="ChEBI" id="CHEBI:77644"/>
        <dbReference type="ChEBI" id="CHEBI:78597"/>
        <dbReference type="ChEBI" id="CHEBI:78599"/>
        <dbReference type="ChEBI" id="CHEBI:78608"/>
        <dbReference type="EC" id="2.3.2.2"/>
    </reaction>
</comment>
<comment type="catalytic activity">
    <reaction>
        <text>glutathione + H2O = L-cysteinylglycine + L-glutamate</text>
        <dbReference type="Rhea" id="RHEA:28807"/>
        <dbReference type="ChEBI" id="CHEBI:15377"/>
        <dbReference type="ChEBI" id="CHEBI:29985"/>
        <dbReference type="ChEBI" id="CHEBI:57925"/>
        <dbReference type="ChEBI" id="CHEBI:61694"/>
        <dbReference type="EC" id="3.4.19.13"/>
    </reaction>
</comment>
<comment type="catalytic activity">
    <reaction>
        <text>an S-substituted glutathione + H2O = an S-substituted L-cysteinylglycine + L-glutamate</text>
        <dbReference type="Rhea" id="RHEA:59468"/>
        <dbReference type="ChEBI" id="CHEBI:15377"/>
        <dbReference type="ChEBI" id="CHEBI:29985"/>
        <dbReference type="ChEBI" id="CHEBI:90779"/>
        <dbReference type="ChEBI" id="CHEBI:143103"/>
        <dbReference type="EC" id="3.4.19.13"/>
    </reaction>
</comment>
<comment type="pathway">
    <text>Sulfur metabolism; glutathione metabolism.</text>
</comment>
<comment type="subunit">
    <text evidence="1">Heterodimer composed of the light and heavy chains. The active site is located in the light chain (By similarity).</text>
</comment>
<comment type="subcellular location">
    <subcellularLocation>
        <location evidence="5">Vacuole membrane</location>
        <topology evidence="5">Single-pass type II membrane protein</topology>
    </subcellularLocation>
</comment>
<comment type="induction">
    <text evidence="4">Induced upon nitrogen starvation and oxidative stress.</text>
</comment>
<comment type="PTM">
    <text evidence="1">Cleaved by autocatalysis into a large and a small subunit.</text>
</comment>
<comment type="similarity">
    <text evidence="5">Belongs to the gamma-glutamyltransferase family.</text>
</comment>